<sequence length="378" mass="41846">MQLPSFLEVYEGLISTSSISSTDPSWDQGNAKVIEKLASWFKDLGFSVEVIEVEPGKHNMIARMGEGEGGLLLAGHSDTVPFDEGRWSFDPHKLTEKDNRFYGLGTADMKGFFAFIYEAVKKIDWSKQTKPLYVLATCDEETTMLGARHFTENAPFKPDYCIIGEPTSLVPIRGHKGHVANAIRVTGKSGHSSDPALGVNAIEIMHEVMFAMMQLRDKLVKEYHHPGFAIPSPTLNLGHIHGGDSANRICGCCELHYDVRPLPGISLDGLENMLRGALKEVEAKWPGRLEIIPLHDPIPGYECQHDHPFIGGVEEICQTSSETVNYCTEAPFLQQLCPTLVLGPGSIDQAHQPDEFLSFDFIDPTIDVLSRAMVKYCC</sequence>
<keyword id="KW-0028">Amino-acid biosynthesis</keyword>
<keyword id="KW-0055">Arginine biosynthesis</keyword>
<keyword id="KW-0170">Cobalt</keyword>
<keyword id="KW-0963">Cytoplasm</keyword>
<keyword id="KW-0378">Hydrolase</keyword>
<keyword id="KW-0479">Metal-binding</keyword>
<keyword id="KW-0862">Zinc</keyword>
<name>ARGE_VIBC1</name>
<feature type="chain" id="PRO_1000065066" description="Acetylornithine deacetylase">
    <location>
        <begin position="1"/>
        <end position="378"/>
    </location>
</feature>
<feature type="active site" evidence="1">
    <location>
        <position position="78"/>
    </location>
</feature>
<feature type="active site" evidence="1">
    <location>
        <position position="140"/>
    </location>
</feature>
<feature type="binding site" evidence="1">
    <location>
        <position position="76"/>
    </location>
    <ligand>
        <name>Zn(2+)</name>
        <dbReference type="ChEBI" id="CHEBI:29105"/>
        <label>1</label>
    </ligand>
</feature>
<feature type="binding site" evidence="1">
    <location>
        <position position="108"/>
    </location>
    <ligand>
        <name>Zn(2+)</name>
        <dbReference type="ChEBI" id="CHEBI:29105"/>
        <label>1</label>
    </ligand>
</feature>
<feature type="binding site" evidence="1">
    <location>
        <position position="108"/>
    </location>
    <ligand>
        <name>Zn(2+)</name>
        <dbReference type="ChEBI" id="CHEBI:29105"/>
        <label>2</label>
    </ligand>
</feature>
<feature type="binding site" evidence="1">
    <location>
        <position position="141"/>
    </location>
    <ligand>
        <name>Zn(2+)</name>
        <dbReference type="ChEBI" id="CHEBI:29105"/>
        <label>2</label>
    </ligand>
</feature>
<feature type="binding site" evidence="1">
    <location>
        <position position="165"/>
    </location>
    <ligand>
        <name>Zn(2+)</name>
        <dbReference type="ChEBI" id="CHEBI:29105"/>
        <label>1</label>
    </ligand>
</feature>
<feature type="binding site" evidence="1">
    <location>
        <position position="351"/>
    </location>
    <ligand>
        <name>Zn(2+)</name>
        <dbReference type="ChEBI" id="CHEBI:29105"/>
        <label>2</label>
    </ligand>
</feature>
<comment type="function">
    <text evidence="1">Catalyzes the hydrolysis of the amide bond of N(2)-acetylated L-amino acids. Cleaves the acetyl group from N-acetyl-L-ornithine to form L-ornithine, an intermediate in L-arginine biosynthesis pathway, and a branchpoint in the synthesis of polyamines.</text>
</comment>
<comment type="catalytic activity">
    <reaction evidence="1">
        <text>N(2)-acetyl-L-ornithine + H2O = L-ornithine + acetate</text>
        <dbReference type="Rhea" id="RHEA:15941"/>
        <dbReference type="ChEBI" id="CHEBI:15377"/>
        <dbReference type="ChEBI" id="CHEBI:30089"/>
        <dbReference type="ChEBI" id="CHEBI:46911"/>
        <dbReference type="ChEBI" id="CHEBI:57805"/>
        <dbReference type="EC" id="3.5.1.16"/>
    </reaction>
</comment>
<comment type="cofactor">
    <cofactor evidence="1">
        <name>Zn(2+)</name>
        <dbReference type="ChEBI" id="CHEBI:29105"/>
    </cofactor>
    <cofactor evidence="1">
        <name>Co(2+)</name>
        <dbReference type="ChEBI" id="CHEBI:48828"/>
    </cofactor>
    <text evidence="1">Binds 2 Zn(2+) or Co(2+) ions per subunit.</text>
</comment>
<comment type="cofactor">
    <cofactor evidence="1">
        <name>glutathione</name>
        <dbReference type="ChEBI" id="CHEBI:57925"/>
    </cofactor>
</comment>
<comment type="pathway">
    <text evidence="1">Amino-acid biosynthesis; L-arginine biosynthesis; L-ornithine from N(2)-acetyl-L-ornithine (linear): step 1/1.</text>
</comment>
<comment type="subunit">
    <text evidence="1">Homodimer.</text>
</comment>
<comment type="subcellular location">
    <subcellularLocation>
        <location evidence="1">Cytoplasm</location>
    </subcellularLocation>
</comment>
<comment type="similarity">
    <text evidence="1">Belongs to the peptidase M20A family. ArgE subfamily.</text>
</comment>
<reference key="1">
    <citation type="submission" date="2007-08" db="EMBL/GenBank/DDBJ databases">
        <authorList>
            <consortium name="The Vibrio harveyi Genome Sequencing Project"/>
            <person name="Bassler B."/>
            <person name="Clifton S.W."/>
            <person name="Fulton L."/>
            <person name="Delehaunty K."/>
            <person name="Fronick C."/>
            <person name="Harrison M."/>
            <person name="Markivic C."/>
            <person name="Fulton R."/>
            <person name="Tin-Wollam A.-M."/>
            <person name="Shah N."/>
            <person name="Pepin K."/>
            <person name="Nash W."/>
            <person name="Thiruvilangam P."/>
            <person name="Bhonagiri V."/>
            <person name="Waters C."/>
            <person name="Tu K.C."/>
            <person name="Irgon J."/>
            <person name="Wilson R.K."/>
        </authorList>
    </citation>
    <scope>NUCLEOTIDE SEQUENCE [LARGE SCALE GENOMIC DNA]</scope>
    <source>
        <strain>ATCC BAA-1116 / BB120</strain>
    </source>
</reference>
<organism>
    <name type="scientific">Vibrio campbellii (strain ATCC BAA-1116)</name>
    <dbReference type="NCBI Taxonomy" id="2902295"/>
    <lineage>
        <taxon>Bacteria</taxon>
        <taxon>Pseudomonadati</taxon>
        <taxon>Pseudomonadota</taxon>
        <taxon>Gammaproteobacteria</taxon>
        <taxon>Vibrionales</taxon>
        <taxon>Vibrionaceae</taxon>
        <taxon>Vibrio</taxon>
    </lineage>
</organism>
<gene>
    <name evidence="1" type="primary">argE</name>
    <name type="ordered locus">VIBHAR_00044</name>
</gene>
<protein>
    <recommendedName>
        <fullName evidence="1">Acetylornithine deacetylase</fullName>
        <shortName evidence="1">AO</shortName>
        <shortName evidence="1">Acetylornithinase</shortName>
        <ecNumber evidence="1">3.5.1.16</ecNumber>
    </recommendedName>
    <alternativeName>
        <fullName evidence="1">N-acetylornithinase</fullName>
        <shortName evidence="1">NAO</shortName>
    </alternativeName>
</protein>
<accession>A7MXC2</accession>
<dbReference type="EC" id="3.5.1.16" evidence="1"/>
<dbReference type="EMBL" id="CP000789">
    <property type="protein sequence ID" value="ABU69104.1"/>
    <property type="molecule type" value="Genomic_DNA"/>
</dbReference>
<dbReference type="RefSeq" id="WP_012126444.1">
    <property type="nucleotide sequence ID" value="NC_022269.1"/>
</dbReference>
<dbReference type="SMR" id="A7MXC2"/>
<dbReference type="KEGG" id="vha:VIBHAR_00044"/>
<dbReference type="PATRIC" id="fig|338187.25.peg.2479"/>
<dbReference type="UniPathway" id="UPA00068">
    <property type="reaction ID" value="UER00110"/>
</dbReference>
<dbReference type="Proteomes" id="UP000008152">
    <property type="component" value="Chromosome I"/>
</dbReference>
<dbReference type="GO" id="GO:0005737">
    <property type="term" value="C:cytoplasm"/>
    <property type="evidence" value="ECO:0007669"/>
    <property type="project" value="UniProtKB-SubCell"/>
</dbReference>
<dbReference type="GO" id="GO:0008777">
    <property type="term" value="F:acetylornithine deacetylase activity"/>
    <property type="evidence" value="ECO:0007669"/>
    <property type="project" value="UniProtKB-UniRule"/>
</dbReference>
<dbReference type="GO" id="GO:0008270">
    <property type="term" value="F:zinc ion binding"/>
    <property type="evidence" value="ECO:0007669"/>
    <property type="project" value="UniProtKB-UniRule"/>
</dbReference>
<dbReference type="GO" id="GO:0006526">
    <property type="term" value="P:L-arginine biosynthetic process"/>
    <property type="evidence" value="ECO:0007669"/>
    <property type="project" value="UniProtKB-UniRule"/>
</dbReference>
<dbReference type="CDD" id="cd03894">
    <property type="entry name" value="M20_ArgE"/>
    <property type="match status" value="1"/>
</dbReference>
<dbReference type="FunFam" id="3.30.70.360:FF:000003">
    <property type="entry name" value="Acetylornithine deacetylase"/>
    <property type="match status" value="1"/>
</dbReference>
<dbReference type="Gene3D" id="3.30.70.360">
    <property type="match status" value="1"/>
</dbReference>
<dbReference type="Gene3D" id="3.40.630.10">
    <property type="entry name" value="Zn peptidases"/>
    <property type="match status" value="1"/>
</dbReference>
<dbReference type="HAMAP" id="MF_01108">
    <property type="entry name" value="ArgE"/>
    <property type="match status" value="1"/>
</dbReference>
<dbReference type="InterPro" id="IPR010169">
    <property type="entry name" value="AcOrn-deacetyl"/>
</dbReference>
<dbReference type="InterPro" id="IPR001261">
    <property type="entry name" value="ArgE/DapE_CS"/>
</dbReference>
<dbReference type="InterPro" id="IPR036264">
    <property type="entry name" value="Bact_exopeptidase_dim_dom"/>
</dbReference>
<dbReference type="InterPro" id="IPR002933">
    <property type="entry name" value="Peptidase_M20"/>
</dbReference>
<dbReference type="InterPro" id="IPR011650">
    <property type="entry name" value="Peptidase_M20_dimer"/>
</dbReference>
<dbReference type="InterPro" id="IPR050072">
    <property type="entry name" value="Peptidase_M20A"/>
</dbReference>
<dbReference type="NCBIfam" id="TIGR01892">
    <property type="entry name" value="AcOrn-deacetyl"/>
    <property type="match status" value="1"/>
</dbReference>
<dbReference type="NCBIfam" id="NF003474">
    <property type="entry name" value="PRK05111.1"/>
    <property type="match status" value="1"/>
</dbReference>
<dbReference type="PANTHER" id="PTHR43808">
    <property type="entry name" value="ACETYLORNITHINE DEACETYLASE"/>
    <property type="match status" value="1"/>
</dbReference>
<dbReference type="PANTHER" id="PTHR43808:SF1">
    <property type="entry name" value="ACETYLORNITHINE DEACETYLASE"/>
    <property type="match status" value="1"/>
</dbReference>
<dbReference type="Pfam" id="PF07687">
    <property type="entry name" value="M20_dimer"/>
    <property type="match status" value="1"/>
</dbReference>
<dbReference type="Pfam" id="PF01546">
    <property type="entry name" value="Peptidase_M20"/>
    <property type="match status" value="1"/>
</dbReference>
<dbReference type="SUPFAM" id="SSF55031">
    <property type="entry name" value="Bacterial exopeptidase dimerisation domain"/>
    <property type="match status" value="1"/>
</dbReference>
<dbReference type="SUPFAM" id="SSF53187">
    <property type="entry name" value="Zn-dependent exopeptidases"/>
    <property type="match status" value="1"/>
</dbReference>
<dbReference type="PROSITE" id="PS00758">
    <property type="entry name" value="ARGE_DAPE_CPG2_1"/>
    <property type="match status" value="1"/>
</dbReference>
<dbReference type="PROSITE" id="PS00759">
    <property type="entry name" value="ARGE_DAPE_CPG2_2"/>
    <property type="match status" value="1"/>
</dbReference>
<evidence type="ECO:0000255" key="1">
    <source>
        <dbReference type="HAMAP-Rule" id="MF_01108"/>
    </source>
</evidence>
<proteinExistence type="inferred from homology"/>